<feature type="chain" id="PRO_0000289625" description="Serine/threonine-protein kinase 4">
    <location>
        <begin position="1"/>
        <end position="487"/>
    </location>
</feature>
<feature type="chain" id="PRO_0000413743" description="Serine/threonine-protein kinase 4 37kDa subunit" evidence="1">
    <location>
        <begin position="1"/>
        <end position="326"/>
    </location>
</feature>
<feature type="chain" id="PRO_0000413744" description="Serine/threonine-protein kinase 4 18kDa subunit" evidence="1">
    <location>
        <begin position="327"/>
        <end position="487"/>
    </location>
</feature>
<feature type="domain" description="Protein kinase" evidence="5">
    <location>
        <begin position="30"/>
        <end position="281"/>
    </location>
</feature>
<feature type="domain" description="SARAH" evidence="6">
    <location>
        <begin position="433"/>
        <end position="480"/>
    </location>
</feature>
<feature type="region of interest" description="Disordered" evidence="7">
    <location>
        <begin position="305"/>
        <end position="337"/>
    </location>
</feature>
<feature type="coiled-coil region" evidence="4">
    <location>
        <begin position="290"/>
        <end position="310"/>
    </location>
</feature>
<feature type="compositionally biased region" description="Acidic residues" evidence="7">
    <location>
        <begin position="313"/>
        <end position="326"/>
    </location>
</feature>
<feature type="active site" description="Proton acceptor" evidence="5">
    <location>
        <position position="149"/>
    </location>
</feature>
<feature type="binding site" evidence="5">
    <location>
        <begin position="36"/>
        <end position="44"/>
    </location>
    <ligand>
        <name>ATP</name>
        <dbReference type="ChEBI" id="CHEBI:30616"/>
    </ligand>
</feature>
<feature type="binding site" evidence="5">
    <location>
        <position position="59"/>
    </location>
    <ligand>
        <name>ATP</name>
        <dbReference type="ChEBI" id="CHEBI:30616"/>
    </ligand>
</feature>
<feature type="site" description="Cleavage; by caspase-3" evidence="1">
    <location>
        <begin position="326"/>
        <end position="327"/>
    </location>
</feature>
<feature type="site" description="Cleavage; by caspase-3" evidence="1">
    <location>
        <begin position="349"/>
        <end position="350"/>
    </location>
</feature>
<feature type="modified residue" description="N-acetylmethionine" evidence="2">
    <location>
        <position position="1"/>
    </location>
</feature>
<feature type="modified residue" description="Phosphothreonine" evidence="2">
    <location>
        <position position="3"/>
    </location>
</feature>
<feature type="modified residue" description="Phosphothreonine; by autocatalysis" evidence="2">
    <location>
        <position position="183"/>
    </location>
</feature>
<feature type="modified residue" description="Phosphoserine" evidence="2">
    <location>
        <position position="265"/>
    </location>
</feature>
<feature type="modified residue" description="Phosphoserine" evidence="2">
    <location>
        <position position="320"/>
    </location>
</feature>
<feature type="modified residue" description="Phosphothreonine" evidence="2">
    <location>
        <position position="340"/>
    </location>
</feature>
<feature type="modified residue" description="Phosphothreonine" evidence="2">
    <location>
        <position position="367"/>
    </location>
</feature>
<feature type="modified residue" description="Phosphothreonine; by PKB/AKT1" evidence="2">
    <location>
        <position position="387"/>
    </location>
</feature>
<feature type="modified residue" description="Phosphoserine" evidence="2">
    <location>
        <position position="410"/>
    </location>
</feature>
<feature type="modified residue" description="Phosphoserine" evidence="2">
    <location>
        <position position="414"/>
    </location>
</feature>
<feature type="modified residue" description="Phosphotyrosine" evidence="3">
    <location>
        <position position="433"/>
    </location>
</feature>
<sequence length="487" mass="55540">METVQLRNPPRRQLKKLDEDSLTKQPEEVFDVLEKLGEGSYGSVYKAIHKETGQIVAIKQVPVESDLQEIIKEISIMQQCDSPHVVKYYGSYFKNTDLWIVMEYCGAGSVSDIIRLRNKTLTEDEIATILQSTLKGLEYLHFMRKIHRDIKAGNILLNTEGHAKLADFGVAGQLTDTMAKRNTVIGTPFWMAPEVIQEIGYNCVADIWSLGITAIEMAEGKPPYADIHPMRAIFMIPTNPPPTFRKPELWSDNFTDFVRQCLVKSPDQRATATQLLQHPFVKSAKGVSILRDLINEAMDVKLKRQEAQQREVDQDDEENSEEDELDSGTMVRAVGDEMGTVRVASTMSDGANTMIEHDDTLPSQLGTMVINADDEEEEGTMKRRDETMQPAKPSFLEYFEQKEKENQINSFGKSVPGPLKNSSDWKVPQDGDYEFLKSWTVEDLQKRLLALDPMMEQEIEEIRQKYQSKRQPILDAIEAKKRRQQNF</sequence>
<keyword id="KW-0007">Acetylation</keyword>
<keyword id="KW-0053">Apoptosis</keyword>
<keyword id="KW-0067">ATP-binding</keyword>
<keyword id="KW-0175">Coiled coil</keyword>
<keyword id="KW-0963">Cytoplasm</keyword>
<keyword id="KW-0418">Kinase</keyword>
<keyword id="KW-0460">Magnesium</keyword>
<keyword id="KW-0479">Metal-binding</keyword>
<keyword id="KW-0547">Nucleotide-binding</keyword>
<keyword id="KW-0539">Nucleus</keyword>
<keyword id="KW-0597">Phosphoprotein</keyword>
<keyword id="KW-1185">Reference proteome</keyword>
<keyword id="KW-0723">Serine/threonine-protein kinase</keyword>
<keyword id="KW-0808">Transferase</keyword>
<reference key="1">
    <citation type="journal article" date="2007" name="Genome Res.">
        <title>Comparative sequence analyses reveal rapid and divergent evolutionary changes of the WFDC locus in the primate lineage.</title>
        <authorList>
            <consortium name="NISC comparative sequencing program"/>
            <person name="Hurle B."/>
            <person name="Swanson W."/>
            <person name="Green E.D."/>
        </authorList>
    </citation>
    <scope>NUCLEOTIDE SEQUENCE [GENOMIC DNA]</scope>
</reference>
<reference key="2">
    <citation type="submission" date="2011-03" db="EMBL/GenBank/DDBJ databases">
        <title>Version 3 of the genome sequence of Otolemur garnettii(Bushbaby).</title>
        <authorList>
            <consortium name="The Broad Institute Genome Sequencing Platform"/>
            <person name="Di Palma F."/>
            <person name="Johnson J."/>
            <person name="Lander E.S."/>
            <person name="Lindblad-Toh K."/>
            <person name="Jaffe D.B."/>
            <person name="Gnerre S."/>
            <person name="MacCallum I."/>
            <person name="Przybylski D."/>
            <person name="Ribeiro F.J."/>
            <person name="Burton J.N."/>
            <person name="Walker B.J."/>
            <person name="Sharpe T."/>
            <person name="Hall G."/>
        </authorList>
    </citation>
    <scope>NUCLEOTIDE SEQUENCE [LARGE SCALE GENOMIC DNA]</scope>
</reference>
<comment type="function">
    <text evidence="2 3">Stress-activated, pro-apoptotic kinase which, following caspase-cleavage, enters the nucleus and induces chromatin condensation followed by internucleosomal DNA fragmentation. Key component of the Hippo signaling pathway which plays a pivotal role in organ size control and tumor suppression by restricting proliferation and promoting apoptosis. The core of this pathway is composed of a kinase cascade wherein STK3/MST2 and STK4/MST1, in complex with its regulatory protein SAV1, phosphorylates and activates LATS1/2 in complex with its regulatory protein MOB1, which in turn phosphorylates and inactivates YAP1 oncoprotein and WWTR1/TAZ. Phosphorylation of YAP1 by LATS2 inhibits its translocation into the nucleus to regulate cellular genes important for cell proliferation, cell death, and cell migration. STK3/MST2 and STK4/MST1 are required to repress proliferation of mature hepatocytes, to prevent activation of facultative adult liver stem cells (oval cells), and to inhibit tumor formation. Phosphorylates 'Ser-14' of histone H2B (H2BS14ph) during apoptosis. Phosphorylates FOXO3 upon oxidative stress, which results in its nuclear translocation and cell death initiation. Phosphorylates MOBKL1A, MOBKL1B and RASSF2. Phosphorylates TNNI3 (cardiac Tn-I) and alters its binding affinity to TNNC1 (cardiac Tn-C) and TNNT2 (cardiac Tn-T). Phosphorylates FOXO1 on 'Ser-212' and regulates its activation and stimulates transcription of PMAIP1 in a FOXO1-dependent manner. Phosphorylates SIRT1 and inhibits SIRT1-mediated p53/TP53 deacetylation, thereby promoting p53/TP53 dependent transcription and apoptosis upon DNA damage. Acts as an inhibitor of PKB/AKT1. Phosphorylates AR on 'Ser-650' and suppresses its activity by intersecting with PKB/AKT1 signaling and antagonizing formation of AR-chromatin complexes.</text>
</comment>
<comment type="catalytic activity">
    <reaction evidence="2">
        <text>L-seryl-[protein] + ATP = O-phospho-L-seryl-[protein] + ADP + H(+)</text>
        <dbReference type="Rhea" id="RHEA:17989"/>
        <dbReference type="Rhea" id="RHEA-COMP:9863"/>
        <dbReference type="Rhea" id="RHEA-COMP:11604"/>
        <dbReference type="ChEBI" id="CHEBI:15378"/>
        <dbReference type="ChEBI" id="CHEBI:29999"/>
        <dbReference type="ChEBI" id="CHEBI:30616"/>
        <dbReference type="ChEBI" id="CHEBI:83421"/>
        <dbReference type="ChEBI" id="CHEBI:456216"/>
        <dbReference type="EC" id="2.7.11.1"/>
    </reaction>
    <physiologicalReaction direction="left-to-right" evidence="2">
        <dbReference type="Rhea" id="RHEA:17990"/>
    </physiologicalReaction>
</comment>
<comment type="catalytic activity">
    <reaction evidence="2">
        <text>L-threonyl-[protein] + ATP = O-phospho-L-threonyl-[protein] + ADP + H(+)</text>
        <dbReference type="Rhea" id="RHEA:46608"/>
        <dbReference type="Rhea" id="RHEA-COMP:11060"/>
        <dbReference type="Rhea" id="RHEA-COMP:11605"/>
        <dbReference type="ChEBI" id="CHEBI:15378"/>
        <dbReference type="ChEBI" id="CHEBI:30013"/>
        <dbReference type="ChEBI" id="CHEBI:30616"/>
        <dbReference type="ChEBI" id="CHEBI:61977"/>
        <dbReference type="ChEBI" id="CHEBI:456216"/>
        <dbReference type="EC" id="2.7.11.1"/>
    </reaction>
    <physiologicalReaction direction="left-to-right" evidence="2">
        <dbReference type="Rhea" id="RHEA:46609"/>
    </physiologicalReaction>
</comment>
<comment type="cofactor">
    <cofactor evidence="1">
        <name>Mg(2+)</name>
        <dbReference type="ChEBI" id="CHEBI:18420"/>
    </cofactor>
</comment>
<comment type="activity regulation">
    <text evidence="1">Inhibited by the C-terminal non-catalytic region. Activated by caspase-cleavage. Full activation also requires homodimerization and autophosphorylation of Thr-183. Activated by RASSF1 which acts by preventing its dephosphorylation (By similarity).</text>
</comment>
<comment type="subunit">
    <text evidence="2">Homodimer; mediated via the coiled-coil region. Interacts with NORE1, which inhibits autoactivation. Interacts with and stabilizes SAV1. Interacts with RASSF1. Interacts with FOXO3. Interacts with RASSF2 (via SARAH domain). Interacts with AR, PKB/AKT1, TNNI3 and SIRT1. Interacts with DLG5 (via PDZ domain 3). Interacts with MARK3 and SCRIB in the presence of DLG5.</text>
</comment>
<comment type="subcellular location">
    <subcellularLocation>
        <location evidence="1">Cytoplasm</location>
    </subcellularLocation>
    <subcellularLocation>
        <location evidence="1">Nucleus</location>
    </subcellularLocation>
    <text evidence="1">The caspase-cleaved form cycles between the nucleus and cytoplasm.</text>
</comment>
<comment type="PTM">
    <text evidence="2">Autophosphorylated on serine and threonine residues. Phosphorylation at Thr-387 by PKB/AKT1, leads to inhibition of its: kinase activity, nuclear translocation and autophosphorylation at Thr-183. It also diminishes its cleavage by caspases and its ability to phosphorylate FOXO3 (By similarity).</text>
</comment>
<comment type="PTM">
    <text evidence="1">Proteolytically cleaved by caspase-3 during apoptosis at Asp-326 and Asp-349 resulting in a 37 kDa or a 39 kDa subunit respectively. The 39 kDa subunit is further cleaved into the 37 kDa form. Proteolytic cleavage results in kinase activation and nuclear translocation of the truncated form (MST1/N). It is less likely that cleavage at Asp-349 is a prerequisite for activation as this site is not conserved in the murine ortholog (By similarity).</text>
</comment>
<comment type="similarity">
    <text evidence="8">Belongs to the protein kinase superfamily. STE Ser/Thr protein kinase family. STE20 subfamily.</text>
</comment>
<name>STK4_OTOGA</name>
<protein>
    <recommendedName>
        <fullName>Serine/threonine-protein kinase 4</fullName>
        <ecNumber>2.7.11.1</ecNumber>
    </recommendedName>
    <component>
        <recommendedName>
            <fullName>Serine/threonine-protein kinase 4 37kDa subunit</fullName>
            <shortName>MST1/N</shortName>
        </recommendedName>
    </component>
    <component>
        <recommendedName>
            <fullName>Serine/threonine-protein kinase 4 18kDa subunit</fullName>
            <shortName>MST1/C</shortName>
        </recommendedName>
    </component>
</protein>
<evidence type="ECO:0000250" key="1"/>
<evidence type="ECO:0000250" key="2">
    <source>
        <dbReference type="UniProtKB" id="Q13043"/>
    </source>
</evidence>
<evidence type="ECO:0000250" key="3">
    <source>
        <dbReference type="UniProtKB" id="Q9JI11"/>
    </source>
</evidence>
<evidence type="ECO:0000255" key="4"/>
<evidence type="ECO:0000255" key="5">
    <source>
        <dbReference type="PROSITE-ProRule" id="PRU00159"/>
    </source>
</evidence>
<evidence type="ECO:0000255" key="6">
    <source>
        <dbReference type="PROSITE-ProRule" id="PRU00310"/>
    </source>
</evidence>
<evidence type="ECO:0000256" key="7">
    <source>
        <dbReference type="SAM" id="MobiDB-lite"/>
    </source>
</evidence>
<evidence type="ECO:0000305" key="8"/>
<gene>
    <name type="primary">STK4</name>
</gene>
<dbReference type="EC" id="2.7.11.1"/>
<dbReference type="EMBL" id="DP000040">
    <property type="protein sequence ID" value="ABO52940.1"/>
    <property type="molecule type" value="Genomic_DNA"/>
</dbReference>
<dbReference type="RefSeq" id="XP_003787676.1">
    <property type="nucleotide sequence ID" value="XM_003787628.3"/>
</dbReference>
<dbReference type="SMR" id="A4K2Q5"/>
<dbReference type="FunCoup" id="A4K2Q5">
    <property type="interactions" value="4335"/>
</dbReference>
<dbReference type="STRING" id="30611.ENSOGAP00000005955"/>
<dbReference type="Ensembl" id="ENSOGAT00000006659.2">
    <property type="protein sequence ID" value="ENSOGAP00000005955.2"/>
    <property type="gene ID" value="ENSOGAG00000006656.2"/>
</dbReference>
<dbReference type="GeneID" id="100959420"/>
<dbReference type="KEGG" id="oga:100959420"/>
<dbReference type="CTD" id="6789"/>
<dbReference type="eggNOG" id="KOG0574">
    <property type="taxonomic scope" value="Eukaryota"/>
</dbReference>
<dbReference type="GeneTree" id="ENSGT00940000159787"/>
<dbReference type="HOGENOM" id="CLU_000288_63_23_1"/>
<dbReference type="InParanoid" id="A4K2Q5"/>
<dbReference type="OMA" id="CDAMKIT"/>
<dbReference type="OrthoDB" id="8693905at2759"/>
<dbReference type="TreeFam" id="TF354217"/>
<dbReference type="Proteomes" id="UP000005225">
    <property type="component" value="Unassembled WGS sequence"/>
</dbReference>
<dbReference type="GO" id="GO:0005737">
    <property type="term" value="C:cytoplasm"/>
    <property type="evidence" value="ECO:0000250"/>
    <property type="project" value="UniProtKB"/>
</dbReference>
<dbReference type="GO" id="GO:0005829">
    <property type="term" value="C:cytosol"/>
    <property type="evidence" value="ECO:0007669"/>
    <property type="project" value="Ensembl"/>
</dbReference>
<dbReference type="GO" id="GO:0016604">
    <property type="term" value="C:nuclear body"/>
    <property type="evidence" value="ECO:0007669"/>
    <property type="project" value="Ensembl"/>
</dbReference>
<dbReference type="GO" id="GO:0005634">
    <property type="term" value="C:nucleus"/>
    <property type="evidence" value="ECO:0000250"/>
    <property type="project" value="UniProtKB"/>
</dbReference>
<dbReference type="GO" id="GO:0032991">
    <property type="term" value="C:protein-containing complex"/>
    <property type="evidence" value="ECO:0007669"/>
    <property type="project" value="Ensembl"/>
</dbReference>
<dbReference type="GO" id="GO:0005524">
    <property type="term" value="F:ATP binding"/>
    <property type="evidence" value="ECO:0007669"/>
    <property type="project" value="UniProtKB-KW"/>
</dbReference>
<dbReference type="GO" id="GO:0000287">
    <property type="term" value="F:magnesium ion binding"/>
    <property type="evidence" value="ECO:0007669"/>
    <property type="project" value="Ensembl"/>
</dbReference>
<dbReference type="GO" id="GO:0042803">
    <property type="term" value="F:protein homodimerization activity"/>
    <property type="evidence" value="ECO:0007669"/>
    <property type="project" value="Ensembl"/>
</dbReference>
<dbReference type="GO" id="GO:0106310">
    <property type="term" value="F:protein serine kinase activity"/>
    <property type="evidence" value="ECO:0007669"/>
    <property type="project" value="RHEA"/>
</dbReference>
<dbReference type="GO" id="GO:0004674">
    <property type="term" value="F:protein serine/threonine kinase activity"/>
    <property type="evidence" value="ECO:0000250"/>
    <property type="project" value="UniProtKB"/>
</dbReference>
<dbReference type="GO" id="GO:0061629">
    <property type="term" value="F:RNA polymerase II-specific DNA-binding transcription factor binding"/>
    <property type="evidence" value="ECO:0007669"/>
    <property type="project" value="Ensembl"/>
</dbReference>
<dbReference type="GO" id="GO:0006915">
    <property type="term" value="P:apoptotic process"/>
    <property type="evidence" value="ECO:0000250"/>
    <property type="project" value="UniProtKB"/>
</dbReference>
<dbReference type="GO" id="GO:0001569">
    <property type="term" value="P:branching involved in blood vessel morphogenesis"/>
    <property type="evidence" value="ECO:0007669"/>
    <property type="project" value="Ensembl"/>
</dbReference>
<dbReference type="GO" id="GO:0060070">
    <property type="term" value="P:canonical Wnt signaling pathway"/>
    <property type="evidence" value="ECO:0007669"/>
    <property type="project" value="Ensembl"/>
</dbReference>
<dbReference type="GO" id="GO:0060706">
    <property type="term" value="P:cell differentiation involved in embryonic placenta development"/>
    <property type="evidence" value="ECO:0007669"/>
    <property type="project" value="Ensembl"/>
</dbReference>
<dbReference type="GO" id="GO:0000902">
    <property type="term" value="P:cell morphogenesis"/>
    <property type="evidence" value="ECO:0007669"/>
    <property type="project" value="Ensembl"/>
</dbReference>
<dbReference type="GO" id="GO:0007417">
    <property type="term" value="P:central nervous system development"/>
    <property type="evidence" value="ECO:0007669"/>
    <property type="project" value="Ensembl"/>
</dbReference>
<dbReference type="GO" id="GO:0003157">
    <property type="term" value="P:endocardium development"/>
    <property type="evidence" value="ECO:0007669"/>
    <property type="project" value="Ensembl"/>
</dbReference>
<dbReference type="GO" id="GO:0050673">
    <property type="term" value="P:epithelial cell proliferation"/>
    <property type="evidence" value="ECO:0007669"/>
    <property type="project" value="Ensembl"/>
</dbReference>
<dbReference type="GO" id="GO:0008625">
    <property type="term" value="P:extrinsic apoptotic signaling pathway via death domain receptors"/>
    <property type="evidence" value="ECO:0007669"/>
    <property type="project" value="Ensembl"/>
</dbReference>
<dbReference type="GO" id="GO:0097284">
    <property type="term" value="P:hepatocyte apoptotic process"/>
    <property type="evidence" value="ECO:0007669"/>
    <property type="project" value="Ensembl"/>
</dbReference>
<dbReference type="GO" id="GO:0035329">
    <property type="term" value="P:hippo signaling"/>
    <property type="evidence" value="ECO:0000250"/>
    <property type="project" value="UniProtKB"/>
</dbReference>
<dbReference type="GO" id="GO:0030216">
    <property type="term" value="P:keratinocyte differentiation"/>
    <property type="evidence" value="ECO:0007669"/>
    <property type="project" value="Ensembl"/>
</dbReference>
<dbReference type="GO" id="GO:0090090">
    <property type="term" value="P:negative regulation of canonical Wnt signaling pathway"/>
    <property type="evidence" value="ECO:0007669"/>
    <property type="project" value="Ensembl"/>
</dbReference>
<dbReference type="GO" id="GO:0050680">
    <property type="term" value="P:negative regulation of epithelial cell proliferation"/>
    <property type="evidence" value="ECO:0007669"/>
    <property type="project" value="Ensembl"/>
</dbReference>
<dbReference type="GO" id="GO:0046621">
    <property type="term" value="P:negative regulation of organ growth"/>
    <property type="evidence" value="ECO:0007669"/>
    <property type="project" value="Ensembl"/>
</dbReference>
<dbReference type="GO" id="GO:0001841">
    <property type="term" value="P:neural tube formation"/>
    <property type="evidence" value="ECO:0007669"/>
    <property type="project" value="Ensembl"/>
</dbReference>
<dbReference type="GO" id="GO:0035265">
    <property type="term" value="P:organ growth"/>
    <property type="evidence" value="ECO:0007669"/>
    <property type="project" value="Ensembl"/>
</dbReference>
<dbReference type="GO" id="GO:1902043">
    <property type="term" value="P:positive regulation of extrinsic apoptotic signaling pathway via death domain receptors"/>
    <property type="evidence" value="ECO:0007669"/>
    <property type="project" value="Ensembl"/>
</dbReference>
<dbReference type="GO" id="GO:0045600">
    <property type="term" value="P:positive regulation of fat cell differentiation"/>
    <property type="evidence" value="ECO:0007669"/>
    <property type="project" value="Ensembl"/>
</dbReference>
<dbReference type="GO" id="GO:1903945">
    <property type="term" value="P:positive regulation of hepatocyte apoptotic process"/>
    <property type="evidence" value="ECO:0007669"/>
    <property type="project" value="Ensembl"/>
</dbReference>
<dbReference type="GO" id="GO:0035332">
    <property type="term" value="P:positive regulation of hippo signaling"/>
    <property type="evidence" value="ECO:0007669"/>
    <property type="project" value="Ensembl"/>
</dbReference>
<dbReference type="GO" id="GO:1904237">
    <property type="term" value="P:positive regulation of substrate-dependent cell migration, cell attachment to substrate"/>
    <property type="evidence" value="ECO:0007669"/>
    <property type="project" value="Ensembl"/>
</dbReference>
<dbReference type="GO" id="GO:0060215">
    <property type="term" value="P:primitive hemopoiesis"/>
    <property type="evidence" value="ECO:0007669"/>
    <property type="project" value="Ensembl"/>
</dbReference>
<dbReference type="GO" id="GO:0006606">
    <property type="term" value="P:protein import into nucleus"/>
    <property type="evidence" value="ECO:0007669"/>
    <property type="project" value="Ensembl"/>
</dbReference>
<dbReference type="GO" id="GO:0050821">
    <property type="term" value="P:protein stabilization"/>
    <property type="evidence" value="ECO:0007669"/>
    <property type="project" value="Ensembl"/>
</dbReference>
<dbReference type="GO" id="GO:0051262">
    <property type="term" value="P:protein tetramerization"/>
    <property type="evidence" value="ECO:0007669"/>
    <property type="project" value="InterPro"/>
</dbReference>
<dbReference type="GO" id="GO:0060800">
    <property type="term" value="P:regulation of cell differentiation involved in embryonic placenta development"/>
    <property type="evidence" value="ECO:0007669"/>
    <property type="project" value="Ensembl"/>
</dbReference>
<dbReference type="CDD" id="cd21887">
    <property type="entry name" value="SARAH_MST1"/>
    <property type="match status" value="1"/>
</dbReference>
<dbReference type="CDD" id="cd06612">
    <property type="entry name" value="STKc_MST1_2"/>
    <property type="match status" value="1"/>
</dbReference>
<dbReference type="FunFam" id="1.10.510.10:FF:000075">
    <property type="entry name" value="Serine/threonine-protein kinase 3"/>
    <property type="match status" value="1"/>
</dbReference>
<dbReference type="FunFam" id="3.30.200.20:FF:000410">
    <property type="entry name" value="Serine/threonine-protein kinase 3"/>
    <property type="match status" value="1"/>
</dbReference>
<dbReference type="FunFam" id="4.10.170.10:FF:000002">
    <property type="entry name" value="serine/threonine-protein kinase 3"/>
    <property type="match status" value="1"/>
</dbReference>
<dbReference type="FunFam" id="1.10.287.4270:FF:000004">
    <property type="entry name" value="Serine/threonine-protein kinase 3/4"/>
    <property type="match status" value="1"/>
</dbReference>
<dbReference type="FunFam" id="1.10.287.4270:FF:000002">
    <property type="entry name" value="Serine/threonine-protein kinase 4"/>
    <property type="match status" value="1"/>
</dbReference>
<dbReference type="Gene3D" id="1.10.287.4270">
    <property type="match status" value="1"/>
</dbReference>
<dbReference type="Gene3D" id="4.10.170.10">
    <property type="entry name" value="p53-like tetramerisation domain"/>
    <property type="match status" value="1"/>
</dbReference>
<dbReference type="Gene3D" id="1.10.510.10">
    <property type="entry name" value="Transferase(Phosphotransferase) domain 1"/>
    <property type="match status" value="1"/>
</dbReference>
<dbReference type="InterPro" id="IPR011009">
    <property type="entry name" value="Kinase-like_dom_sf"/>
</dbReference>
<dbReference type="InterPro" id="IPR024205">
    <property type="entry name" value="Mst1_2_SARAH_domain"/>
</dbReference>
<dbReference type="InterPro" id="IPR036674">
    <property type="entry name" value="p53_tetramer_sf"/>
</dbReference>
<dbReference type="InterPro" id="IPR000719">
    <property type="entry name" value="Prot_kinase_dom"/>
</dbReference>
<dbReference type="InterPro" id="IPR017441">
    <property type="entry name" value="Protein_kinase_ATP_BS"/>
</dbReference>
<dbReference type="InterPro" id="IPR011524">
    <property type="entry name" value="SARAH_dom"/>
</dbReference>
<dbReference type="InterPro" id="IPR050629">
    <property type="entry name" value="STE20/SPS1-PAK"/>
</dbReference>
<dbReference type="PANTHER" id="PTHR48012:SF2">
    <property type="entry name" value="STERILE20-LIKE KINASE, ISOFORM B"/>
    <property type="match status" value="1"/>
</dbReference>
<dbReference type="PANTHER" id="PTHR48012">
    <property type="entry name" value="STERILE20-LIKE KINASE, ISOFORM B-RELATED"/>
    <property type="match status" value="1"/>
</dbReference>
<dbReference type="Pfam" id="PF11629">
    <property type="entry name" value="Mst1_SARAH"/>
    <property type="match status" value="1"/>
</dbReference>
<dbReference type="Pfam" id="PF00069">
    <property type="entry name" value="Pkinase"/>
    <property type="match status" value="1"/>
</dbReference>
<dbReference type="SMART" id="SM00220">
    <property type="entry name" value="S_TKc"/>
    <property type="match status" value="1"/>
</dbReference>
<dbReference type="SUPFAM" id="SSF56112">
    <property type="entry name" value="Protein kinase-like (PK-like)"/>
    <property type="match status" value="1"/>
</dbReference>
<dbReference type="PROSITE" id="PS00107">
    <property type="entry name" value="PROTEIN_KINASE_ATP"/>
    <property type="match status" value="1"/>
</dbReference>
<dbReference type="PROSITE" id="PS50011">
    <property type="entry name" value="PROTEIN_KINASE_DOM"/>
    <property type="match status" value="1"/>
</dbReference>
<dbReference type="PROSITE" id="PS50951">
    <property type="entry name" value="SARAH"/>
    <property type="match status" value="1"/>
</dbReference>
<organism>
    <name type="scientific">Otolemur garnettii</name>
    <name type="common">Small-eared galago</name>
    <name type="synonym">Garnett's greater bushbaby</name>
    <dbReference type="NCBI Taxonomy" id="30611"/>
    <lineage>
        <taxon>Eukaryota</taxon>
        <taxon>Metazoa</taxon>
        <taxon>Chordata</taxon>
        <taxon>Craniata</taxon>
        <taxon>Vertebrata</taxon>
        <taxon>Euteleostomi</taxon>
        <taxon>Mammalia</taxon>
        <taxon>Eutheria</taxon>
        <taxon>Euarchontoglires</taxon>
        <taxon>Primates</taxon>
        <taxon>Strepsirrhini</taxon>
        <taxon>Lorisiformes</taxon>
        <taxon>Galagidae</taxon>
        <taxon>Otolemur</taxon>
    </lineage>
</organism>
<proteinExistence type="inferred from homology"/>
<accession>A4K2Q5</accession>